<dbReference type="EC" id="2.7.4.3" evidence="1"/>
<dbReference type="EMBL" id="CP000702">
    <property type="protein sequence ID" value="ABQ47327.1"/>
    <property type="molecule type" value="Genomic_DNA"/>
</dbReference>
<dbReference type="RefSeq" id="WP_011943798.1">
    <property type="nucleotide sequence ID" value="NC_009486.1"/>
</dbReference>
<dbReference type="SMR" id="A5IMA4"/>
<dbReference type="STRING" id="390874.Tpet_1313"/>
<dbReference type="KEGG" id="tpt:Tpet_1313"/>
<dbReference type="eggNOG" id="COG0563">
    <property type="taxonomic scope" value="Bacteria"/>
</dbReference>
<dbReference type="HOGENOM" id="CLU_032354_1_2_0"/>
<dbReference type="UniPathway" id="UPA00588">
    <property type="reaction ID" value="UER00649"/>
</dbReference>
<dbReference type="Proteomes" id="UP000006558">
    <property type="component" value="Chromosome"/>
</dbReference>
<dbReference type="GO" id="GO:0005737">
    <property type="term" value="C:cytoplasm"/>
    <property type="evidence" value="ECO:0007669"/>
    <property type="project" value="UniProtKB-SubCell"/>
</dbReference>
<dbReference type="GO" id="GO:0004017">
    <property type="term" value="F:adenylate kinase activity"/>
    <property type="evidence" value="ECO:0007669"/>
    <property type="project" value="UniProtKB-UniRule"/>
</dbReference>
<dbReference type="GO" id="GO:0005524">
    <property type="term" value="F:ATP binding"/>
    <property type="evidence" value="ECO:0007669"/>
    <property type="project" value="UniProtKB-UniRule"/>
</dbReference>
<dbReference type="GO" id="GO:0008270">
    <property type="term" value="F:zinc ion binding"/>
    <property type="evidence" value="ECO:0007669"/>
    <property type="project" value="UniProtKB-UniRule"/>
</dbReference>
<dbReference type="GO" id="GO:0044209">
    <property type="term" value="P:AMP salvage"/>
    <property type="evidence" value="ECO:0007669"/>
    <property type="project" value="UniProtKB-UniRule"/>
</dbReference>
<dbReference type="CDD" id="cd01428">
    <property type="entry name" value="ADK"/>
    <property type="match status" value="1"/>
</dbReference>
<dbReference type="FunFam" id="3.40.50.300:FF:000106">
    <property type="entry name" value="Adenylate kinase mitochondrial"/>
    <property type="match status" value="1"/>
</dbReference>
<dbReference type="Gene3D" id="3.40.50.300">
    <property type="entry name" value="P-loop containing nucleotide triphosphate hydrolases"/>
    <property type="match status" value="1"/>
</dbReference>
<dbReference type="HAMAP" id="MF_00235">
    <property type="entry name" value="Adenylate_kinase_Adk"/>
    <property type="match status" value="1"/>
</dbReference>
<dbReference type="InterPro" id="IPR006259">
    <property type="entry name" value="Adenyl_kin_sub"/>
</dbReference>
<dbReference type="InterPro" id="IPR000850">
    <property type="entry name" value="Adenylat/UMP-CMP_kin"/>
</dbReference>
<dbReference type="InterPro" id="IPR033690">
    <property type="entry name" value="Adenylat_kinase_CS"/>
</dbReference>
<dbReference type="InterPro" id="IPR007862">
    <property type="entry name" value="Adenylate_kinase_lid-dom"/>
</dbReference>
<dbReference type="InterPro" id="IPR027417">
    <property type="entry name" value="P-loop_NTPase"/>
</dbReference>
<dbReference type="NCBIfam" id="TIGR01351">
    <property type="entry name" value="adk"/>
    <property type="match status" value="1"/>
</dbReference>
<dbReference type="NCBIfam" id="NF001380">
    <property type="entry name" value="PRK00279.1-2"/>
    <property type="match status" value="1"/>
</dbReference>
<dbReference type="NCBIfam" id="NF001381">
    <property type="entry name" value="PRK00279.1-3"/>
    <property type="match status" value="1"/>
</dbReference>
<dbReference type="NCBIfam" id="NF001386">
    <property type="entry name" value="PRK00279.2-4"/>
    <property type="match status" value="1"/>
</dbReference>
<dbReference type="NCBIfam" id="NF011100">
    <property type="entry name" value="PRK14527.1"/>
    <property type="match status" value="1"/>
</dbReference>
<dbReference type="PANTHER" id="PTHR23359">
    <property type="entry name" value="NUCLEOTIDE KINASE"/>
    <property type="match status" value="1"/>
</dbReference>
<dbReference type="Pfam" id="PF00406">
    <property type="entry name" value="ADK"/>
    <property type="match status" value="1"/>
</dbReference>
<dbReference type="Pfam" id="PF05191">
    <property type="entry name" value="ADK_lid"/>
    <property type="match status" value="1"/>
</dbReference>
<dbReference type="PRINTS" id="PR00094">
    <property type="entry name" value="ADENYLTKNASE"/>
</dbReference>
<dbReference type="SUPFAM" id="SSF52540">
    <property type="entry name" value="P-loop containing nucleoside triphosphate hydrolases"/>
    <property type="match status" value="1"/>
</dbReference>
<dbReference type="PROSITE" id="PS00113">
    <property type="entry name" value="ADENYLATE_KINASE"/>
    <property type="match status" value="1"/>
</dbReference>
<proteinExistence type="inferred from homology"/>
<keyword id="KW-0067">ATP-binding</keyword>
<keyword id="KW-0963">Cytoplasm</keyword>
<keyword id="KW-0418">Kinase</keyword>
<keyword id="KW-0479">Metal-binding</keyword>
<keyword id="KW-0545">Nucleotide biosynthesis</keyword>
<keyword id="KW-0547">Nucleotide-binding</keyword>
<keyword id="KW-0808">Transferase</keyword>
<keyword id="KW-0862">Zinc</keyword>
<feature type="chain" id="PRO_1000021779" description="Adenylate kinase">
    <location>
        <begin position="1"/>
        <end position="220"/>
    </location>
</feature>
<feature type="region of interest" description="NMP" evidence="1">
    <location>
        <begin position="32"/>
        <end position="62"/>
    </location>
</feature>
<feature type="region of interest" description="LID" evidence="1">
    <location>
        <begin position="129"/>
        <end position="166"/>
    </location>
</feature>
<feature type="binding site" evidence="1">
    <location>
        <begin position="12"/>
        <end position="17"/>
    </location>
    <ligand>
        <name>ATP</name>
        <dbReference type="ChEBI" id="CHEBI:30616"/>
    </ligand>
</feature>
<feature type="binding site" evidence="1">
    <location>
        <position position="33"/>
    </location>
    <ligand>
        <name>AMP</name>
        <dbReference type="ChEBI" id="CHEBI:456215"/>
    </ligand>
</feature>
<feature type="binding site" evidence="1">
    <location>
        <position position="38"/>
    </location>
    <ligand>
        <name>AMP</name>
        <dbReference type="ChEBI" id="CHEBI:456215"/>
    </ligand>
</feature>
<feature type="binding site" evidence="1">
    <location>
        <begin position="60"/>
        <end position="62"/>
    </location>
    <ligand>
        <name>AMP</name>
        <dbReference type="ChEBI" id="CHEBI:456215"/>
    </ligand>
</feature>
<feature type="binding site" evidence="1">
    <location>
        <begin position="88"/>
        <end position="91"/>
    </location>
    <ligand>
        <name>AMP</name>
        <dbReference type="ChEBI" id="CHEBI:456215"/>
    </ligand>
</feature>
<feature type="binding site" evidence="1">
    <location>
        <position position="95"/>
    </location>
    <ligand>
        <name>AMP</name>
        <dbReference type="ChEBI" id="CHEBI:456215"/>
    </ligand>
</feature>
<feature type="binding site" evidence="1">
    <location>
        <position position="130"/>
    </location>
    <ligand>
        <name>ATP</name>
        <dbReference type="ChEBI" id="CHEBI:30616"/>
    </ligand>
</feature>
<feature type="binding site" evidence="1">
    <location>
        <position position="133"/>
    </location>
    <ligand>
        <name>Zn(2+)</name>
        <dbReference type="ChEBI" id="CHEBI:29105"/>
        <note>structural</note>
    </ligand>
</feature>
<feature type="binding site" evidence="1">
    <location>
        <position position="136"/>
    </location>
    <ligand>
        <name>Zn(2+)</name>
        <dbReference type="ChEBI" id="CHEBI:29105"/>
        <note>structural</note>
    </ligand>
</feature>
<feature type="binding site" evidence="1">
    <location>
        <begin position="139"/>
        <end position="140"/>
    </location>
    <ligand>
        <name>ATP</name>
        <dbReference type="ChEBI" id="CHEBI:30616"/>
    </ligand>
</feature>
<feature type="binding site" evidence="1">
    <location>
        <position position="153"/>
    </location>
    <ligand>
        <name>Zn(2+)</name>
        <dbReference type="ChEBI" id="CHEBI:29105"/>
        <note>structural</note>
    </ligand>
</feature>
<feature type="binding site" evidence="1">
    <location>
        <position position="156"/>
    </location>
    <ligand>
        <name>Zn(2+)</name>
        <dbReference type="ChEBI" id="CHEBI:29105"/>
        <note>structural</note>
    </ligand>
</feature>
<feature type="binding site" evidence="1">
    <location>
        <position position="163"/>
    </location>
    <ligand>
        <name>AMP</name>
        <dbReference type="ChEBI" id="CHEBI:456215"/>
    </ligand>
</feature>
<feature type="binding site" evidence="1">
    <location>
        <position position="174"/>
    </location>
    <ligand>
        <name>AMP</name>
        <dbReference type="ChEBI" id="CHEBI:456215"/>
    </ligand>
</feature>
<feature type="binding site" evidence="1">
    <location>
        <position position="202"/>
    </location>
    <ligand>
        <name>ATP</name>
        <dbReference type="ChEBI" id="CHEBI:30616"/>
    </ligand>
</feature>
<reference key="1">
    <citation type="submission" date="2007-05" db="EMBL/GenBank/DDBJ databases">
        <title>Complete sequence of Thermotoga petrophila RKU-1.</title>
        <authorList>
            <consortium name="US DOE Joint Genome Institute"/>
            <person name="Copeland A."/>
            <person name="Lucas S."/>
            <person name="Lapidus A."/>
            <person name="Barry K."/>
            <person name="Glavina del Rio T."/>
            <person name="Dalin E."/>
            <person name="Tice H."/>
            <person name="Pitluck S."/>
            <person name="Sims D."/>
            <person name="Brettin T."/>
            <person name="Bruce D."/>
            <person name="Detter J.C."/>
            <person name="Han C."/>
            <person name="Tapia R."/>
            <person name="Schmutz J."/>
            <person name="Larimer F."/>
            <person name="Land M."/>
            <person name="Hauser L."/>
            <person name="Kyrpides N."/>
            <person name="Mikhailova N."/>
            <person name="Nelson K."/>
            <person name="Gogarten J.P."/>
            <person name="Noll K."/>
            <person name="Richardson P."/>
        </authorList>
    </citation>
    <scope>NUCLEOTIDE SEQUENCE [LARGE SCALE GENOMIC DNA]</scope>
    <source>
        <strain>ATCC BAA-488 / DSM 13995 / JCM 10881 / RKU-1</strain>
    </source>
</reference>
<organism>
    <name type="scientific">Thermotoga petrophila (strain ATCC BAA-488 / DSM 13995 / JCM 10881 / RKU-1)</name>
    <dbReference type="NCBI Taxonomy" id="390874"/>
    <lineage>
        <taxon>Bacteria</taxon>
        <taxon>Thermotogati</taxon>
        <taxon>Thermotogota</taxon>
        <taxon>Thermotogae</taxon>
        <taxon>Thermotogales</taxon>
        <taxon>Thermotogaceae</taxon>
        <taxon>Thermotoga</taxon>
    </lineage>
</organism>
<evidence type="ECO:0000255" key="1">
    <source>
        <dbReference type="HAMAP-Rule" id="MF_00235"/>
    </source>
</evidence>
<gene>
    <name evidence="1" type="primary">adk</name>
    <name type="ordered locus">Tpet_1313</name>
</gene>
<comment type="function">
    <text evidence="1">Catalyzes the reversible transfer of the terminal phosphate group between ATP and AMP. Plays an important role in cellular energy homeostasis and in adenine nucleotide metabolism.</text>
</comment>
<comment type="catalytic activity">
    <reaction evidence="1">
        <text>AMP + ATP = 2 ADP</text>
        <dbReference type="Rhea" id="RHEA:12973"/>
        <dbReference type="ChEBI" id="CHEBI:30616"/>
        <dbReference type="ChEBI" id="CHEBI:456215"/>
        <dbReference type="ChEBI" id="CHEBI:456216"/>
        <dbReference type="EC" id="2.7.4.3"/>
    </reaction>
</comment>
<comment type="pathway">
    <text evidence="1">Purine metabolism; AMP biosynthesis via salvage pathway; AMP from ADP: step 1/1.</text>
</comment>
<comment type="subunit">
    <text evidence="1">Monomer.</text>
</comment>
<comment type="subcellular location">
    <subcellularLocation>
        <location evidence="1">Cytoplasm</location>
    </subcellularLocation>
</comment>
<comment type="domain">
    <text evidence="1">Consists of three domains, a large central CORE domain and two small peripheral domains, NMPbind and LID, which undergo movements during catalysis. The LID domain closes over the site of phosphoryl transfer upon ATP binding. Assembling and dissambling the active center during each catalytic cycle provides an effective means to prevent ATP hydrolysis. Some bacteria have evolved a zinc-coordinating structure that stabilizes the LID domain.</text>
</comment>
<comment type="similarity">
    <text evidence="1">Belongs to the adenylate kinase family.</text>
</comment>
<sequence length="220" mass="25226">MMAYLVFLGPPGAGKGTYAKRLQEITGIPHISTGDIFRDIVKKENDELGKKIKEIMERGELVPDELVNEVVKRRLSEKDCERGFILDGYPRTVAQAEFLDDFLKNQNKELTAAVLFEVPEEVVVQRLTARRICPKCGRIYNLISLPPKEDELCDDCKVKLVQREDDKEETVRHRYKVYLEKTQPVIDYYDKKGILKRVDGTIGIDNVIAEVLKIVGWSDK</sequence>
<name>KAD_THEP1</name>
<protein>
    <recommendedName>
        <fullName evidence="1">Adenylate kinase</fullName>
        <shortName evidence="1">AK</shortName>
        <ecNumber evidence="1">2.7.4.3</ecNumber>
    </recommendedName>
    <alternativeName>
        <fullName evidence="1">ATP-AMP transphosphorylase</fullName>
    </alternativeName>
    <alternativeName>
        <fullName evidence="1">ATP:AMP phosphotransferase</fullName>
    </alternativeName>
    <alternativeName>
        <fullName evidence="1">Adenylate monophosphate kinase</fullName>
    </alternativeName>
</protein>
<accession>A5IMA4</accession>